<comment type="subcellular location">
    <subcellularLocation>
        <location evidence="5">Membrane</location>
        <topology evidence="5">Single-pass type II membrane protein</topology>
    </subcellularLocation>
    <subcellularLocation>
        <location>Golgi apparatus</location>
        <location>trans-Golgi network membrane</location>
    </subcellularLocation>
    <subcellularLocation>
        <location evidence="5">Cell projection</location>
        <location evidence="5">Dendrite</location>
    </subcellularLocation>
    <subcellularLocation>
        <location evidence="5">Endosome membrane</location>
    </subcellularLocation>
    <subcellularLocation>
        <location evidence="5">Early endosome membrane</location>
    </subcellularLocation>
    <subcellularLocation>
        <location evidence="5">Late endosome membrane</location>
    </subcellularLocation>
    <subcellularLocation>
        <location evidence="5">Lysosome lumen</location>
    </subcellularLocation>
    <subcellularLocation>
        <location evidence="1">Cytoplasmic vesicle membrane</location>
    </subcellularLocation>
    <subcellularLocation>
        <location evidence="1">Golgi apparatus</location>
        <location evidence="1">Golgi stack membrane</location>
    </subcellularLocation>
    <subcellularLocation>
        <location evidence="1">Endosome</location>
        <location evidence="1">Multivesicular body membrane</location>
    </subcellularLocation>
    <text evidence="1 5">Endocytosed from the cell surface, thus entered into early endosomes, trafficks to late endosomes and degradates in lysosomes (PubMed:28874679). Mainly Golgi stack, but also found in small vacuolar organelles and multivesicular bodies. Found in both stationary and motile endosomes (By similarity).</text>
</comment>
<comment type="similarity">
    <text evidence="6">Belongs to the NSG family.</text>
</comment>
<keyword id="KW-0966">Cell projection</keyword>
<keyword id="KW-0968">Cytoplasmic vesicle</keyword>
<keyword id="KW-0967">Endosome</keyword>
<keyword id="KW-0333">Golgi apparatus</keyword>
<keyword id="KW-0458">Lysosome</keyword>
<keyword id="KW-0472">Membrane</keyword>
<keyword id="KW-1185">Reference proteome</keyword>
<keyword id="KW-0735">Signal-anchor</keyword>
<keyword id="KW-0812">Transmembrane</keyword>
<keyword id="KW-1133">Transmembrane helix</keyword>
<reference key="1">
    <citation type="journal article" date="2004" name="Nature">
        <title>Genome sequence of the Brown Norway rat yields insights into mammalian evolution.</title>
        <authorList>
            <person name="Gibbs R.A."/>
            <person name="Weinstock G.M."/>
            <person name="Metzker M.L."/>
            <person name="Muzny D.M."/>
            <person name="Sodergren E.J."/>
            <person name="Scherer S."/>
            <person name="Scott G."/>
            <person name="Steffen D."/>
            <person name="Worley K.C."/>
            <person name="Burch P.E."/>
            <person name="Okwuonu G."/>
            <person name="Hines S."/>
            <person name="Lewis L."/>
            <person name="Deramo C."/>
            <person name="Delgado O."/>
            <person name="Dugan-Rocha S."/>
            <person name="Miner G."/>
            <person name="Morgan M."/>
            <person name="Hawes A."/>
            <person name="Gill R."/>
            <person name="Holt R.A."/>
            <person name="Adams M.D."/>
            <person name="Amanatides P.G."/>
            <person name="Baden-Tillson H."/>
            <person name="Barnstead M."/>
            <person name="Chin S."/>
            <person name="Evans C.A."/>
            <person name="Ferriera S."/>
            <person name="Fosler C."/>
            <person name="Glodek A."/>
            <person name="Gu Z."/>
            <person name="Jennings D."/>
            <person name="Kraft C.L."/>
            <person name="Nguyen T."/>
            <person name="Pfannkoch C.M."/>
            <person name="Sitter C."/>
            <person name="Sutton G.G."/>
            <person name="Venter J.C."/>
            <person name="Woodage T."/>
            <person name="Smith D."/>
            <person name="Lee H.-M."/>
            <person name="Gustafson E."/>
            <person name="Cahill P."/>
            <person name="Kana A."/>
            <person name="Doucette-Stamm L."/>
            <person name="Weinstock K."/>
            <person name="Fechtel K."/>
            <person name="Weiss R.B."/>
            <person name="Dunn D.M."/>
            <person name="Green E.D."/>
            <person name="Blakesley R.W."/>
            <person name="Bouffard G.G."/>
            <person name="De Jong P.J."/>
            <person name="Osoegawa K."/>
            <person name="Zhu B."/>
            <person name="Marra M."/>
            <person name="Schein J."/>
            <person name="Bosdet I."/>
            <person name="Fjell C."/>
            <person name="Jones S."/>
            <person name="Krzywinski M."/>
            <person name="Mathewson C."/>
            <person name="Siddiqui A."/>
            <person name="Wye N."/>
            <person name="McPherson J."/>
            <person name="Zhao S."/>
            <person name="Fraser C.M."/>
            <person name="Shetty J."/>
            <person name="Shatsman S."/>
            <person name="Geer K."/>
            <person name="Chen Y."/>
            <person name="Abramzon S."/>
            <person name="Nierman W.C."/>
            <person name="Havlak P.H."/>
            <person name="Chen R."/>
            <person name="Durbin K.J."/>
            <person name="Egan A."/>
            <person name="Ren Y."/>
            <person name="Song X.-Z."/>
            <person name="Li B."/>
            <person name="Liu Y."/>
            <person name="Qin X."/>
            <person name="Cawley S."/>
            <person name="Cooney A.J."/>
            <person name="D'Souza L.M."/>
            <person name="Martin K."/>
            <person name="Wu J.Q."/>
            <person name="Gonzalez-Garay M.L."/>
            <person name="Jackson A.R."/>
            <person name="Kalafus K.J."/>
            <person name="McLeod M.P."/>
            <person name="Milosavljevic A."/>
            <person name="Virk D."/>
            <person name="Volkov A."/>
            <person name="Wheeler D.A."/>
            <person name="Zhang Z."/>
            <person name="Bailey J.A."/>
            <person name="Eichler E.E."/>
            <person name="Tuzun E."/>
            <person name="Birney E."/>
            <person name="Mongin E."/>
            <person name="Ureta-Vidal A."/>
            <person name="Woodwark C."/>
            <person name="Zdobnov E."/>
            <person name="Bork P."/>
            <person name="Suyama M."/>
            <person name="Torrents D."/>
            <person name="Alexandersson M."/>
            <person name="Trask B.J."/>
            <person name="Young J.M."/>
            <person name="Huang H."/>
            <person name="Wang H."/>
            <person name="Xing H."/>
            <person name="Daniels S."/>
            <person name="Gietzen D."/>
            <person name="Schmidt J."/>
            <person name="Stevens K."/>
            <person name="Vitt U."/>
            <person name="Wingrove J."/>
            <person name="Camara F."/>
            <person name="Mar Alba M."/>
            <person name="Abril J.F."/>
            <person name="Guigo R."/>
            <person name="Smit A."/>
            <person name="Dubchak I."/>
            <person name="Rubin E.M."/>
            <person name="Couronne O."/>
            <person name="Poliakov A."/>
            <person name="Huebner N."/>
            <person name="Ganten D."/>
            <person name="Goesele C."/>
            <person name="Hummel O."/>
            <person name="Kreitler T."/>
            <person name="Lee Y.-A."/>
            <person name="Monti J."/>
            <person name="Schulz H."/>
            <person name="Zimdahl H."/>
            <person name="Himmelbauer H."/>
            <person name="Lehrach H."/>
            <person name="Jacob H.J."/>
            <person name="Bromberg S."/>
            <person name="Gullings-Handley J."/>
            <person name="Jensen-Seaman M.I."/>
            <person name="Kwitek A.E."/>
            <person name="Lazar J."/>
            <person name="Pasko D."/>
            <person name="Tonellato P.J."/>
            <person name="Twigger S."/>
            <person name="Ponting C.P."/>
            <person name="Duarte J.M."/>
            <person name="Rice S."/>
            <person name="Goodstadt L."/>
            <person name="Beatson S.A."/>
            <person name="Emes R.D."/>
            <person name="Winter E.E."/>
            <person name="Webber C."/>
            <person name="Brandt P."/>
            <person name="Nyakatura G."/>
            <person name="Adetobi M."/>
            <person name="Chiaromonte F."/>
            <person name="Elnitski L."/>
            <person name="Eswara P."/>
            <person name="Hardison R.C."/>
            <person name="Hou M."/>
            <person name="Kolbe D."/>
            <person name="Makova K."/>
            <person name="Miller W."/>
            <person name="Nekrutenko A."/>
            <person name="Riemer C."/>
            <person name="Schwartz S."/>
            <person name="Taylor J."/>
            <person name="Yang S."/>
            <person name="Zhang Y."/>
            <person name="Lindpaintner K."/>
            <person name="Andrews T.D."/>
            <person name="Caccamo M."/>
            <person name="Clamp M."/>
            <person name="Clarke L."/>
            <person name="Curwen V."/>
            <person name="Durbin R.M."/>
            <person name="Eyras E."/>
            <person name="Searle S.M."/>
            <person name="Cooper G.M."/>
            <person name="Batzoglou S."/>
            <person name="Brudno M."/>
            <person name="Sidow A."/>
            <person name="Stone E.A."/>
            <person name="Payseur B.A."/>
            <person name="Bourque G."/>
            <person name="Lopez-Otin C."/>
            <person name="Puente X.S."/>
            <person name="Chakrabarti K."/>
            <person name="Chatterji S."/>
            <person name="Dewey C."/>
            <person name="Pachter L."/>
            <person name="Bray N."/>
            <person name="Yap V.B."/>
            <person name="Caspi A."/>
            <person name="Tesler G."/>
            <person name="Pevzner P.A."/>
            <person name="Haussler D."/>
            <person name="Roskin K.M."/>
            <person name="Baertsch R."/>
            <person name="Clawson H."/>
            <person name="Furey T.S."/>
            <person name="Hinrichs A.S."/>
            <person name="Karolchik D."/>
            <person name="Kent W.J."/>
            <person name="Rosenbloom K.R."/>
            <person name="Trumbower H."/>
            <person name="Weirauch M."/>
            <person name="Cooper D.N."/>
            <person name="Stenson P.D."/>
            <person name="Ma B."/>
            <person name="Brent M."/>
            <person name="Arumugam M."/>
            <person name="Shteynberg D."/>
            <person name="Copley R.R."/>
            <person name="Taylor M.S."/>
            <person name="Riethman H."/>
            <person name="Mudunuri U."/>
            <person name="Peterson J."/>
            <person name="Guyer M."/>
            <person name="Felsenfeld A."/>
            <person name="Old S."/>
            <person name="Mockrin S."/>
            <person name="Collins F.S."/>
        </authorList>
    </citation>
    <scope>NUCLEOTIDE SEQUENCE [LARGE SCALE GENOMIC DNA]</scope>
    <source>
        <strain>Brown Norway</strain>
    </source>
</reference>
<reference key="2">
    <citation type="submission" date="2005-07" db="EMBL/GenBank/DDBJ databases">
        <authorList>
            <person name="Mural R.J."/>
            <person name="Adams M.D."/>
            <person name="Myers E.W."/>
            <person name="Smith H.O."/>
            <person name="Venter J.C."/>
        </authorList>
    </citation>
    <scope>NUCLEOTIDE SEQUENCE [LARGE SCALE GENOMIC DNA]</scope>
</reference>
<reference key="3">
    <citation type="journal article" date="2004" name="Genome Res.">
        <title>The status, quality, and expansion of the NIH full-length cDNA project: the Mammalian Gene Collection (MGC).</title>
        <authorList>
            <consortium name="The MGC Project Team"/>
        </authorList>
    </citation>
    <scope>NUCLEOTIDE SEQUENCE [LARGE SCALE MRNA]</scope>
</reference>
<reference key="4">
    <citation type="journal article" date="2017" name="Sci. Rep.">
        <title>The endosomal neuronal proteins Nsg1/NEEP21 and Nsg2/P19 are itinerant, not resident proteins of dendritic endosomes.</title>
        <authorList>
            <person name="Yap C.C."/>
            <person name="Digilio L."/>
            <person name="McMahon L."/>
            <person name="Winckler B."/>
        </authorList>
    </citation>
    <scope>SUBCELLULAR LOCATION</scope>
    <scope>TOPOLOGY</scope>
</reference>
<protein>
    <recommendedName>
        <fullName evidence="2">Neuronal vesicle trafficking-associated protein 2</fullName>
    </recommendedName>
    <alternativeName>
        <fullName evidence="2">Neuron-specific protein family member 2</fullName>
    </alternativeName>
</protein>
<dbReference type="EMBL" id="AABR07029218">
    <property type="status" value="NOT_ANNOTATED_CDS"/>
    <property type="molecule type" value="Genomic_DNA"/>
</dbReference>
<dbReference type="EMBL" id="CH473948">
    <property type="protein sequence ID" value="EDM04026.1"/>
    <property type="molecule type" value="Genomic_DNA"/>
</dbReference>
<dbReference type="EMBL" id="CH473948">
    <property type="protein sequence ID" value="EDM04027.1"/>
    <property type="molecule type" value="Genomic_DNA"/>
</dbReference>
<dbReference type="EMBL" id="CH473948">
    <property type="protein sequence ID" value="EDM04028.1"/>
    <property type="molecule type" value="Genomic_DNA"/>
</dbReference>
<dbReference type="EMBL" id="CH473948">
    <property type="protein sequence ID" value="EDM04029.1"/>
    <property type="molecule type" value="Genomic_DNA"/>
</dbReference>
<dbReference type="EMBL" id="BC105916">
    <property type="protein sequence ID" value="AAI05917.1"/>
    <property type="molecule type" value="mRNA"/>
</dbReference>
<dbReference type="RefSeq" id="NP_001029324.1">
    <property type="nucleotide sequence ID" value="NM_001034152.1"/>
</dbReference>
<dbReference type="SMR" id="Q3KR51"/>
<dbReference type="FunCoup" id="Q3KR51">
    <property type="interactions" value="2143"/>
</dbReference>
<dbReference type="STRING" id="10116.ENSRNOP00000028069"/>
<dbReference type="iPTMnet" id="Q3KR51"/>
<dbReference type="PhosphoSitePlus" id="Q3KR51"/>
<dbReference type="PaxDb" id="10116-ENSRNOP00000028069"/>
<dbReference type="Ensembl" id="ENSRNOT00000028069.5">
    <property type="protein sequence ID" value="ENSRNOP00000028069.3"/>
    <property type="gene ID" value="ENSRNOG00000020644.5"/>
</dbReference>
<dbReference type="GeneID" id="497878"/>
<dbReference type="KEGG" id="rno:497878"/>
<dbReference type="UCSC" id="RGD:1563944">
    <property type="organism name" value="rat"/>
</dbReference>
<dbReference type="AGR" id="RGD:1563944"/>
<dbReference type="CTD" id="51617"/>
<dbReference type="RGD" id="1563944">
    <property type="gene designation" value="Nsg2"/>
</dbReference>
<dbReference type="eggNOG" id="ENOG502QRFC">
    <property type="taxonomic scope" value="Eukaryota"/>
</dbReference>
<dbReference type="GeneTree" id="ENSGT00390000000483"/>
<dbReference type="HOGENOM" id="CLU_112085_1_0_1"/>
<dbReference type="InParanoid" id="Q3KR51"/>
<dbReference type="OMA" id="LWREDSW"/>
<dbReference type="OrthoDB" id="9268at9989"/>
<dbReference type="PhylomeDB" id="Q3KR51"/>
<dbReference type="TreeFam" id="TF332232"/>
<dbReference type="PRO" id="PR:Q3KR51"/>
<dbReference type="Proteomes" id="UP000002494">
    <property type="component" value="Chromosome 10"/>
</dbReference>
<dbReference type="Proteomes" id="UP000234681">
    <property type="component" value="Chromosome 10"/>
</dbReference>
<dbReference type="Bgee" id="ENSRNOG00000020644">
    <property type="expression patterns" value="Expressed in frontal cortex and 19 other cell types or tissues"/>
</dbReference>
<dbReference type="GO" id="GO:0030659">
    <property type="term" value="C:cytoplasmic vesicle membrane"/>
    <property type="evidence" value="ECO:0000250"/>
    <property type="project" value="UniProtKB"/>
</dbReference>
<dbReference type="GO" id="GO:0030425">
    <property type="term" value="C:dendrite"/>
    <property type="evidence" value="ECO:0000314"/>
    <property type="project" value="UniProtKB"/>
</dbReference>
<dbReference type="GO" id="GO:0005769">
    <property type="term" value="C:early endosome"/>
    <property type="evidence" value="ECO:0000314"/>
    <property type="project" value="UniProtKB"/>
</dbReference>
<dbReference type="GO" id="GO:0031901">
    <property type="term" value="C:early endosome membrane"/>
    <property type="evidence" value="ECO:0007669"/>
    <property type="project" value="UniProtKB-SubCell"/>
</dbReference>
<dbReference type="GO" id="GO:0005768">
    <property type="term" value="C:endosome"/>
    <property type="evidence" value="ECO:0000314"/>
    <property type="project" value="UniProtKB"/>
</dbReference>
<dbReference type="GO" id="GO:0098978">
    <property type="term" value="C:glutamatergic synapse"/>
    <property type="evidence" value="ECO:0000266"/>
    <property type="project" value="RGD"/>
</dbReference>
<dbReference type="GO" id="GO:1990674">
    <property type="term" value="C:Golgi cis cisterna membrane"/>
    <property type="evidence" value="ECO:0000250"/>
    <property type="project" value="UniProtKB"/>
</dbReference>
<dbReference type="GO" id="GO:0005770">
    <property type="term" value="C:late endosome"/>
    <property type="evidence" value="ECO:0000314"/>
    <property type="project" value="UniProtKB"/>
</dbReference>
<dbReference type="GO" id="GO:0043202">
    <property type="term" value="C:lysosomal lumen"/>
    <property type="evidence" value="ECO:0000314"/>
    <property type="project" value="UniProtKB"/>
</dbReference>
<dbReference type="GO" id="GO:0016020">
    <property type="term" value="C:membrane"/>
    <property type="evidence" value="ECO:0000318"/>
    <property type="project" value="GO_Central"/>
</dbReference>
<dbReference type="GO" id="GO:0032585">
    <property type="term" value="C:multivesicular body membrane"/>
    <property type="evidence" value="ECO:0000250"/>
    <property type="project" value="UniProtKB"/>
</dbReference>
<dbReference type="GO" id="GO:0098839">
    <property type="term" value="C:postsynaptic density membrane"/>
    <property type="evidence" value="ECO:0000266"/>
    <property type="project" value="RGD"/>
</dbReference>
<dbReference type="GO" id="GO:0032588">
    <property type="term" value="C:trans-Golgi network membrane"/>
    <property type="evidence" value="ECO:0000314"/>
    <property type="project" value="UniProtKB"/>
</dbReference>
<dbReference type="GO" id="GO:0032051">
    <property type="term" value="F:clathrin light chain binding"/>
    <property type="evidence" value="ECO:0000318"/>
    <property type="project" value="GO_Central"/>
</dbReference>
<dbReference type="GO" id="GO:0048268">
    <property type="term" value="P:clathrin coat assembly"/>
    <property type="evidence" value="ECO:0000318"/>
    <property type="project" value="GO_Central"/>
</dbReference>
<dbReference type="GO" id="GO:0016197">
    <property type="term" value="P:endosomal transport"/>
    <property type="evidence" value="ECO:0000318"/>
    <property type="project" value="GO_Central"/>
</dbReference>
<dbReference type="GO" id="GO:0099072">
    <property type="term" value="P:regulation of postsynaptic membrane neurotransmitter receptor levels"/>
    <property type="evidence" value="ECO:0000266"/>
    <property type="project" value="RGD"/>
</dbReference>
<dbReference type="InterPro" id="IPR009431">
    <property type="entry name" value="NSG"/>
</dbReference>
<dbReference type="PANTHER" id="PTHR28546:SF2">
    <property type="entry name" value="NEURONAL VESICLE TRAFFICKING-ASSOCIATED PROTEIN 2"/>
    <property type="match status" value="1"/>
</dbReference>
<dbReference type="PANTHER" id="PTHR28546">
    <property type="entry name" value="NEURONAL VESICLE TRAFFICKING-ASSOCIATED PROTEIN 2-RELATED"/>
    <property type="match status" value="1"/>
</dbReference>
<dbReference type="Pfam" id="PF06387">
    <property type="entry name" value="Calcyon"/>
    <property type="match status" value="1"/>
</dbReference>
<dbReference type="PIRSF" id="PIRSF002383">
    <property type="entry name" value="Calcyon"/>
    <property type="match status" value="1"/>
</dbReference>
<evidence type="ECO:0000250" key="1">
    <source>
        <dbReference type="UniProtKB" id="P47759"/>
    </source>
</evidence>
<evidence type="ECO:0000250" key="2">
    <source>
        <dbReference type="UniProtKB" id="Q9Y328"/>
    </source>
</evidence>
<evidence type="ECO:0000255" key="3"/>
<evidence type="ECO:0000256" key="4">
    <source>
        <dbReference type="SAM" id="MobiDB-lite"/>
    </source>
</evidence>
<evidence type="ECO:0000269" key="5">
    <source>
    </source>
</evidence>
<evidence type="ECO:0000305" key="6"/>
<evidence type="ECO:0000312" key="7">
    <source>
        <dbReference type="RGD" id="1563944"/>
    </source>
</evidence>
<gene>
    <name evidence="7" type="primary">Nsg2</name>
</gene>
<accession>Q3KR51</accession>
<organism>
    <name type="scientific">Rattus norvegicus</name>
    <name type="common">Rat</name>
    <dbReference type="NCBI Taxonomy" id="10116"/>
    <lineage>
        <taxon>Eukaryota</taxon>
        <taxon>Metazoa</taxon>
        <taxon>Chordata</taxon>
        <taxon>Craniata</taxon>
        <taxon>Vertebrata</taxon>
        <taxon>Euteleostomi</taxon>
        <taxon>Mammalia</taxon>
        <taxon>Eutheria</taxon>
        <taxon>Euarchontoglires</taxon>
        <taxon>Glires</taxon>
        <taxon>Rodentia</taxon>
        <taxon>Myomorpha</taxon>
        <taxon>Muroidea</taxon>
        <taxon>Muridae</taxon>
        <taxon>Murinae</taxon>
        <taxon>Rattus</taxon>
    </lineage>
</organism>
<sequence length="171" mass="18986">MVKLNGNPGEKGAKPPSVEDGFQTVPLITPLEVNHLQLSAPEKVIVKTRTEYQPEQRNKGKFRVPKIAEFTVTILVSLALAFLACIVFLVVYKAFTYDHSCPEGFVYKHKRCIPASLDAYYSSQDPSSRSRFYTVISHYSVAKQSTARAIGPWLSAAAVIHEPKPPKTQGH</sequence>
<feature type="chain" id="PRO_0000442707" description="Neuronal vesicle trafficking-associated protein 2">
    <location>
        <begin position="1"/>
        <end position="171"/>
    </location>
</feature>
<feature type="topological domain" description="Cytoplasmic" evidence="5">
    <location>
        <begin position="1"/>
        <end position="71"/>
    </location>
</feature>
<feature type="transmembrane region" description="Helical; Signal-anchor for type II membrane protein" evidence="3">
    <location>
        <begin position="72"/>
        <end position="92"/>
    </location>
</feature>
<feature type="topological domain" description="Lumenal" evidence="5">
    <location>
        <begin position="93"/>
        <end position="171"/>
    </location>
</feature>
<feature type="region of interest" description="Disordered" evidence="4">
    <location>
        <begin position="1"/>
        <end position="21"/>
    </location>
</feature>
<proteinExistence type="evidence at protein level"/>
<name>NSG2_RAT</name>